<name>KTHY_ACIBY</name>
<reference key="1">
    <citation type="journal article" date="2008" name="PLoS ONE">
        <title>Comparative analysis of Acinetobacters: three genomes for three lifestyles.</title>
        <authorList>
            <person name="Vallenet D."/>
            <person name="Nordmann P."/>
            <person name="Barbe V."/>
            <person name="Poirel L."/>
            <person name="Mangenot S."/>
            <person name="Bataille E."/>
            <person name="Dossat C."/>
            <person name="Gas S."/>
            <person name="Kreimeyer A."/>
            <person name="Lenoble P."/>
            <person name="Oztas S."/>
            <person name="Poulain J."/>
            <person name="Segurens B."/>
            <person name="Robert C."/>
            <person name="Abergel C."/>
            <person name="Claverie J.-M."/>
            <person name="Raoult D."/>
            <person name="Medigue C."/>
            <person name="Weissenbach J."/>
            <person name="Cruveiller S."/>
        </authorList>
    </citation>
    <scope>NUCLEOTIDE SEQUENCE [LARGE SCALE GENOMIC DNA]</scope>
    <source>
        <strain>AYE</strain>
    </source>
</reference>
<gene>
    <name evidence="1" type="primary">tmk</name>
    <name type="ordered locus">ABAYE0933</name>
</gene>
<comment type="function">
    <text evidence="1">Phosphorylation of dTMP to form dTDP in both de novo and salvage pathways of dTTP synthesis.</text>
</comment>
<comment type="catalytic activity">
    <reaction evidence="1">
        <text>dTMP + ATP = dTDP + ADP</text>
        <dbReference type="Rhea" id="RHEA:13517"/>
        <dbReference type="ChEBI" id="CHEBI:30616"/>
        <dbReference type="ChEBI" id="CHEBI:58369"/>
        <dbReference type="ChEBI" id="CHEBI:63528"/>
        <dbReference type="ChEBI" id="CHEBI:456216"/>
        <dbReference type="EC" id="2.7.4.9"/>
    </reaction>
</comment>
<comment type="similarity">
    <text evidence="1">Belongs to the thymidylate kinase family.</text>
</comment>
<organism>
    <name type="scientific">Acinetobacter baumannii (strain AYE)</name>
    <dbReference type="NCBI Taxonomy" id="509173"/>
    <lineage>
        <taxon>Bacteria</taxon>
        <taxon>Pseudomonadati</taxon>
        <taxon>Pseudomonadota</taxon>
        <taxon>Gammaproteobacteria</taxon>
        <taxon>Moraxellales</taxon>
        <taxon>Moraxellaceae</taxon>
        <taxon>Acinetobacter</taxon>
        <taxon>Acinetobacter calcoaceticus/baumannii complex</taxon>
    </lineage>
</organism>
<accession>B0VCV4</accession>
<keyword id="KW-0067">ATP-binding</keyword>
<keyword id="KW-0418">Kinase</keyword>
<keyword id="KW-0545">Nucleotide biosynthesis</keyword>
<keyword id="KW-0547">Nucleotide-binding</keyword>
<keyword id="KW-0808">Transferase</keyword>
<sequence>MFISFEGTEGVGKTTLIRKIHQHFEEQGKQVVLTREPGGTPLAEQIRSMLLAVNHNENMSHDTELLLIYAARAQHLQQVILPALESNKIVLSDRFTDASFAYQCSGRGLSQDKLQLLNQNFVSSMPEVTFWLDAPIELGMNRARERGALDRFEQEKLSFFTKVREGYETLWKAEPERIKRLDATQSPDQVFEQALQYLA</sequence>
<protein>
    <recommendedName>
        <fullName evidence="1">Thymidylate kinase</fullName>
        <ecNumber evidence="1">2.7.4.9</ecNumber>
    </recommendedName>
    <alternativeName>
        <fullName evidence="1">dTMP kinase</fullName>
    </alternativeName>
</protein>
<feature type="chain" id="PRO_1000097369" description="Thymidylate kinase">
    <location>
        <begin position="1"/>
        <end position="199"/>
    </location>
</feature>
<feature type="binding site" evidence="1">
    <location>
        <begin position="7"/>
        <end position="14"/>
    </location>
    <ligand>
        <name>ATP</name>
        <dbReference type="ChEBI" id="CHEBI:30616"/>
    </ligand>
</feature>
<dbReference type="EC" id="2.7.4.9" evidence="1"/>
<dbReference type="EMBL" id="CU459141">
    <property type="protein sequence ID" value="CAM85878.1"/>
    <property type="molecule type" value="Genomic_DNA"/>
</dbReference>
<dbReference type="RefSeq" id="WP_000470769.1">
    <property type="nucleotide sequence ID" value="NZ_JBDGFB010000021.1"/>
</dbReference>
<dbReference type="SMR" id="B0VCV4"/>
<dbReference type="EnsemblBacteria" id="CAM85878">
    <property type="protein sequence ID" value="CAM85878"/>
    <property type="gene ID" value="ABAYE0933"/>
</dbReference>
<dbReference type="KEGG" id="aby:ABAYE0933"/>
<dbReference type="HOGENOM" id="CLU_049131_0_2_6"/>
<dbReference type="GO" id="GO:0005829">
    <property type="term" value="C:cytosol"/>
    <property type="evidence" value="ECO:0007669"/>
    <property type="project" value="TreeGrafter"/>
</dbReference>
<dbReference type="GO" id="GO:0005524">
    <property type="term" value="F:ATP binding"/>
    <property type="evidence" value="ECO:0007669"/>
    <property type="project" value="UniProtKB-UniRule"/>
</dbReference>
<dbReference type="GO" id="GO:0004798">
    <property type="term" value="F:dTMP kinase activity"/>
    <property type="evidence" value="ECO:0007669"/>
    <property type="project" value="UniProtKB-UniRule"/>
</dbReference>
<dbReference type="GO" id="GO:0006233">
    <property type="term" value="P:dTDP biosynthetic process"/>
    <property type="evidence" value="ECO:0007669"/>
    <property type="project" value="InterPro"/>
</dbReference>
<dbReference type="GO" id="GO:0006235">
    <property type="term" value="P:dTTP biosynthetic process"/>
    <property type="evidence" value="ECO:0007669"/>
    <property type="project" value="UniProtKB-UniRule"/>
</dbReference>
<dbReference type="GO" id="GO:0006227">
    <property type="term" value="P:dUDP biosynthetic process"/>
    <property type="evidence" value="ECO:0007669"/>
    <property type="project" value="TreeGrafter"/>
</dbReference>
<dbReference type="CDD" id="cd01672">
    <property type="entry name" value="TMPK"/>
    <property type="match status" value="1"/>
</dbReference>
<dbReference type="FunFam" id="3.40.50.300:FF:000225">
    <property type="entry name" value="Thymidylate kinase"/>
    <property type="match status" value="1"/>
</dbReference>
<dbReference type="Gene3D" id="3.40.50.300">
    <property type="entry name" value="P-loop containing nucleotide triphosphate hydrolases"/>
    <property type="match status" value="1"/>
</dbReference>
<dbReference type="HAMAP" id="MF_00165">
    <property type="entry name" value="Thymidylate_kinase"/>
    <property type="match status" value="1"/>
</dbReference>
<dbReference type="InterPro" id="IPR027417">
    <property type="entry name" value="P-loop_NTPase"/>
</dbReference>
<dbReference type="InterPro" id="IPR039430">
    <property type="entry name" value="Thymidylate_kin-like_dom"/>
</dbReference>
<dbReference type="InterPro" id="IPR018094">
    <property type="entry name" value="Thymidylate_kinase"/>
</dbReference>
<dbReference type="NCBIfam" id="TIGR00041">
    <property type="entry name" value="DTMP_kinase"/>
    <property type="match status" value="1"/>
</dbReference>
<dbReference type="PANTHER" id="PTHR10344">
    <property type="entry name" value="THYMIDYLATE KINASE"/>
    <property type="match status" value="1"/>
</dbReference>
<dbReference type="PANTHER" id="PTHR10344:SF4">
    <property type="entry name" value="UMP-CMP KINASE 2, MITOCHONDRIAL"/>
    <property type="match status" value="1"/>
</dbReference>
<dbReference type="Pfam" id="PF02223">
    <property type="entry name" value="Thymidylate_kin"/>
    <property type="match status" value="1"/>
</dbReference>
<dbReference type="SUPFAM" id="SSF52540">
    <property type="entry name" value="P-loop containing nucleoside triphosphate hydrolases"/>
    <property type="match status" value="1"/>
</dbReference>
<evidence type="ECO:0000255" key="1">
    <source>
        <dbReference type="HAMAP-Rule" id="MF_00165"/>
    </source>
</evidence>
<proteinExistence type="inferred from homology"/>